<keyword id="KW-0067">ATP-binding</keyword>
<keyword id="KW-0175">Coiled coil</keyword>
<keyword id="KW-0963">Cytoplasm</keyword>
<keyword id="KW-0381">Hypersensitive response</keyword>
<keyword id="KW-0433">Leucine-rich repeat</keyword>
<keyword id="KW-0472">Membrane</keyword>
<keyword id="KW-0547">Nucleotide-binding</keyword>
<keyword id="KW-0611">Plant defense</keyword>
<keyword id="KW-0677">Repeat</keyword>
<sequence length="1306" mass="151161">MYFNNELSDLKDHLLRKLQYYTYSDVVRDRINFILWEFKFLDCFLYLKSFPFASECGMLHVSQKMIEIWKSQWNKLIYICMYDEEGSPWDAVVYWKELISQTKQEFRAQYSFPKSPLAANEVIDDDDDDNTHSPEFVMEVIGFFVGNINVLVKINDPCSCFFVPGLKEQIEQILKELKLLRFLVCFVSNKCIVPQYRCTTFYTRALIEASYIAMVAWLYLPIYGNGNQDLAPSEVSRLLSDFMEMKIKSIEPGISRNSIYIDVLQALKSTIPQAQKKHVEIPTHSLTVGLSDQMANLQEMLCLLRDNLIHLPILDLEFHLQDMDSVIVDAGLLIYSLYDIKGQMEDTSLDVINWALGFDLPRNIEPIKVMAYLVMQKAFHCNLPRIHGLGYVDFLLKNLNDFQDCYSDSLAFLKNQLQVIQTEFESLQPFLKVVAEEPHNKLKTLNEDCATQIIRKAYEVEYVVDACINKEALHWCLERWLLDIIEEITCIKAKIQEKNTVEDTMKTVIARTSSKLARTPRMKEEIVGFEDVIENLRKKLLSRTKGQDVISIHGMPGLGKTTLANRLYSDRSVVSQFDFCAQCCVSQVYSCKDLLLSLLRDAIGEESERRELPDNELADMLRKTLLPRRYLILVDDVWDNSAWDDLRGCFPDVNNRSRIILTTRHHEVAKYASVRSDPLHLRMFDEVESWKLLEKKVFGEQSCPPLLKNIGLRIAKMCGQLPLSIVLVAGILSEMEKDVECWEQVANNLGSHIHNDSRAIVDQSYHVLPCHLKSCFLYFGAFLEDRVIDISRLIRLWISEAFIKSSEGRSLEDIAEGYLENLIGRNLVMVTQRAISDGKVKACRLHDVLLDFCKERAAEENFLLWINRDQITKPSSCVYSHKQHAHLAFTEMHNLVEWSASCSFVGSVVLSNKYEPYFHDLSSLHDFSISRILPNFKFLKVLDLEHRVFIDFIPTELPYLRYFSALIDQNSIPSSISNLWNLETLILNRRSADSHNRVLLPSTVWDMVKLRHLHIPNFSPENKKALLKNSPNLDDLETLSYPYFARVKDAELMLRKTPNLRKLTCKVKCLEYLHQYHALNFPIRLEILKLYRSNAFKAIPFCISAPNLKYLKLSGFYLDSQYLSKTADHLKNLEVLKLYYVEFGDHREWKVSNGMFPQLKILKLEDVSLMKWIVADDAFPNLEQLVLRGCQDLMEIPSCFMDILSLQYIEVEDCNESVVKSAMNIQETQVEDYQNTNFKLVLIEKWPKFYKLFSQLSLPRGLVLHLGIESVSSDEKEKKLTVTGDVDADEVQLVVEKLRKCGMPGL</sequence>
<accession>Q60CZ8</accession>
<feature type="chain" id="PRO_0000233963" description="Putative late blight resistance protein homolog R1A-10">
    <location>
        <begin position="1"/>
        <end position="1306"/>
    </location>
</feature>
<feature type="domain" description="NB-ARC">
    <location>
        <begin position="521"/>
        <end position="808"/>
    </location>
</feature>
<feature type="repeat" description="LRR 1">
    <location>
        <begin position="858"/>
        <end position="881"/>
    </location>
</feature>
<feature type="repeat" description="LRR 2">
    <location>
        <begin position="921"/>
        <end position="935"/>
    </location>
</feature>
<feature type="repeat" description="LRR 3">
    <location>
        <begin position="936"/>
        <end position="961"/>
    </location>
</feature>
<feature type="repeat" description="LRR 4">
    <location>
        <begin position="979"/>
        <end position="1007"/>
    </location>
</feature>
<feature type="repeat" description="LRR 5">
    <location>
        <begin position="1010"/>
        <end position="1035"/>
    </location>
</feature>
<feature type="repeat" description="LRR 6">
    <location>
        <begin position="1057"/>
        <end position="1081"/>
    </location>
</feature>
<feature type="repeat" description="LRR 7">
    <location>
        <begin position="1082"/>
        <end position="1106"/>
    </location>
</feature>
<feature type="repeat" description="LRR 8">
    <location>
        <begin position="1110"/>
        <end position="1129"/>
    </location>
</feature>
<feature type="repeat" description="LRR 9">
    <location>
        <begin position="1130"/>
        <end position="1153"/>
    </location>
</feature>
<feature type="repeat" description="LRR 10">
    <location>
        <begin position="1156"/>
        <end position="1181"/>
    </location>
</feature>
<feature type="repeat" description="LRR 11">
    <location>
        <begin position="1216"/>
        <end position="1240"/>
    </location>
</feature>
<feature type="domain" description="HMA" evidence="3">
    <location>
        <begin position="1240"/>
        <end position="1306"/>
    </location>
</feature>
<feature type="coiled-coil region" evidence="2">
    <location>
        <begin position="407"/>
        <end position="428"/>
    </location>
</feature>
<feature type="coiled-coil region" evidence="2">
    <location>
        <begin position="520"/>
        <end position="542"/>
    </location>
</feature>
<feature type="binding site" evidence="2">
    <location>
        <begin position="554"/>
        <end position="561"/>
    </location>
    <ligand>
        <name>ATP</name>
        <dbReference type="ChEBI" id="CHEBI:30616"/>
    </ligand>
</feature>
<organism>
    <name type="scientific">Solanum demissum</name>
    <name type="common">Wild potato</name>
    <dbReference type="NCBI Taxonomy" id="50514"/>
    <lineage>
        <taxon>Eukaryota</taxon>
        <taxon>Viridiplantae</taxon>
        <taxon>Streptophyta</taxon>
        <taxon>Embryophyta</taxon>
        <taxon>Tracheophyta</taxon>
        <taxon>Spermatophyta</taxon>
        <taxon>Magnoliopsida</taxon>
        <taxon>eudicotyledons</taxon>
        <taxon>Gunneridae</taxon>
        <taxon>Pentapetalae</taxon>
        <taxon>asterids</taxon>
        <taxon>lamiids</taxon>
        <taxon>Solanales</taxon>
        <taxon>Solanaceae</taxon>
        <taxon>Solanoideae</taxon>
        <taxon>Solaneae</taxon>
        <taxon>Solanum</taxon>
    </lineage>
</organism>
<reference key="1">
    <citation type="journal article" date="2005" name="Plant J.">
        <title>The R1 resistance gene cluster contains three groups of independently evolving, type I R1 homologues and shows substantial structural variation among haplotypes of Solanum demissum.</title>
        <authorList>
            <person name="Kuang H."/>
            <person name="Wei F."/>
            <person name="Marano M.R."/>
            <person name="Wirtz U."/>
            <person name="Wang X."/>
            <person name="Liu J."/>
            <person name="Shum W.P."/>
            <person name="Zaborsky J."/>
            <person name="Tallon L.J."/>
            <person name="Rensink W."/>
            <person name="Lobst S."/>
            <person name="Zhang P."/>
            <person name="Tornqvist C.-E."/>
            <person name="Tek A."/>
            <person name="Bamberg J."/>
            <person name="Helgeson J."/>
            <person name="Fry W."/>
            <person name="You F."/>
            <person name="Luo M.-C."/>
            <person name="Jiang J."/>
            <person name="Buell C.R."/>
            <person name="Baker B."/>
        </authorList>
    </citation>
    <scope>NUCLEOTIDE SEQUENCE [GENOMIC DNA]</scope>
</reference>
<name>R1A10_SOLDE</name>
<proteinExistence type="inferred from homology"/>
<protein>
    <recommendedName>
        <fullName>Putative late blight resistance protein homolog R1A-10</fullName>
    </recommendedName>
</protein>
<dbReference type="EMBL" id="AC151815">
    <property type="protein sequence ID" value="AAU93589.1"/>
    <property type="molecule type" value="Genomic_DNA"/>
</dbReference>
<dbReference type="SMR" id="Q60CZ8"/>
<dbReference type="GO" id="GO:0005737">
    <property type="term" value="C:cytoplasm"/>
    <property type="evidence" value="ECO:0007669"/>
    <property type="project" value="UniProtKB-SubCell"/>
</dbReference>
<dbReference type="GO" id="GO:0016020">
    <property type="term" value="C:membrane"/>
    <property type="evidence" value="ECO:0007669"/>
    <property type="project" value="UniProtKB-SubCell"/>
</dbReference>
<dbReference type="GO" id="GO:0043531">
    <property type="term" value="F:ADP binding"/>
    <property type="evidence" value="ECO:0007669"/>
    <property type="project" value="InterPro"/>
</dbReference>
<dbReference type="GO" id="GO:0005524">
    <property type="term" value="F:ATP binding"/>
    <property type="evidence" value="ECO:0007669"/>
    <property type="project" value="UniProtKB-KW"/>
</dbReference>
<dbReference type="GO" id="GO:0046872">
    <property type="term" value="F:metal ion binding"/>
    <property type="evidence" value="ECO:0007669"/>
    <property type="project" value="InterPro"/>
</dbReference>
<dbReference type="GO" id="GO:0009626">
    <property type="term" value="P:plant-type hypersensitive response"/>
    <property type="evidence" value="ECO:0007669"/>
    <property type="project" value="UniProtKB-KW"/>
</dbReference>
<dbReference type="CDD" id="cd14798">
    <property type="entry name" value="RX-CC_like"/>
    <property type="match status" value="1"/>
</dbReference>
<dbReference type="FunFam" id="3.40.50.300:FF:001091">
    <property type="entry name" value="Probable disease resistance protein At1g61300"/>
    <property type="match status" value="1"/>
</dbReference>
<dbReference type="FunFam" id="1.10.10.10:FF:000322">
    <property type="entry name" value="Probable disease resistance protein At1g63360"/>
    <property type="match status" value="1"/>
</dbReference>
<dbReference type="Gene3D" id="1.10.8.430">
    <property type="entry name" value="Helical domain of apoptotic protease-activating factors"/>
    <property type="match status" value="1"/>
</dbReference>
<dbReference type="Gene3D" id="3.40.50.300">
    <property type="entry name" value="P-loop containing nucleotide triphosphate hydrolases"/>
    <property type="match status" value="1"/>
</dbReference>
<dbReference type="Gene3D" id="3.80.10.10">
    <property type="entry name" value="Ribonuclease Inhibitor"/>
    <property type="match status" value="1"/>
</dbReference>
<dbReference type="Gene3D" id="1.10.10.10">
    <property type="entry name" value="Winged helix-like DNA-binding domain superfamily/Winged helix DNA-binding domain"/>
    <property type="match status" value="1"/>
</dbReference>
<dbReference type="InterPro" id="IPR042197">
    <property type="entry name" value="Apaf_helical"/>
</dbReference>
<dbReference type="InterPro" id="IPR044974">
    <property type="entry name" value="Disease_R_plants"/>
</dbReference>
<dbReference type="InterPro" id="IPR006121">
    <property type="entry name" value="HMA_dom"/>
</dbReference>
<dbReference type="InterPro" id="IPR032675">
    <property type="entry name" value="LRR_dom_sf"/>
</dbReference>
<dbReference type="InterPro" id="IPR002182">
    <property type="entry name" value="NB-ARC"/>
</dbReference>
<dbReference type="InterPro" id="IPR027417">
    <property type="entry name" value="P-loop_NTPase"/>
</dbReference>
<dbReference type="InterPro" id="IPR021929">
    <property type="entry name" value="R1A-like_N"/>
</dbReference>
<dbReference type="InterPro" id="IPR038005">
    <property type="entry name" value="RX-like_CC"/>
</dbReference>
<dbReference type="InterPro" id="IPR036388">
    <property type="entry name" value="WH-like_DNA-bd_sf"/>
</dbReference>
<dbReference type="PANTHER" id="PTHR23155:SF1152">
    <property type="entry name" value="AAA+ ATPASE DOMAIN-CONTAINING PROTEIN"/>
    <property type="match status" value="1"/>
</dbReference>
<dbReference type="PANTHER" id="PTHR23155">
    <property type="entry name" value="DISEASE RESISTANCE PROTEIN RP"/>
    <property type="match status" value="1"/>
</dbReference>
<dbReference type="Pfam" id="PF00931">
    <property type="entry name" value="NB-ARC"/>
    <property type="match status" value="1"/>
</dbReference>
<dbReference type="Pfam" id="PF12061">
    <property type="entry name" value="NB-LRR"/>
    <property type="match status" value="2"/>
</dbReference>
<dbReference type="Pfam" id="PF23559">
    <property type="entry name" value="WH_DRP"/>
    <property type="match status" value="1"/>
</dbReference>
<dbReference type="PRINTS" id="PR00364">
    <property type="entry name" value="DISEASERSIST"/>
</dbReference>
<dbReference type="SUPFAM" id="SSF52058">
    <property type="entry name" value="L domain-like"/>
    <property type="match status" value="1"/>
</dbReference>
<dbReference type="SUPFAM" id="SSF52540">
    <property type="entry name" value="P-loop containing nucleoside triphosphate hydrolases"/>
    <property type="match status" value="1"/>
</dbReference>
<dbReference type="PROSITE" id="PS50846">
    <property type="entry name" value="HMA_2"/>
    <property type="match status" value="1"/>
</dbReference>
<evidence type="ECO:0000250" key="1"/>
<evidence type="ECO:0000255" key="2"/>
<evidence type="ECO:0000255" key="3">
    <source>
        <dbReference type="PROSITE-ProRule" id="PRU00280"/>
    </source>
</evidence>
<evidence type="ECO:0000305" key="4"/>
<gene>
    <name type="primary">R1A-10</name>
    <name type="ORF">PGEC472P22.11</name>
</gene>
<comment type="function">
    <text>Confers resistance to late blight (Phytophthora infestans) races carrying the avirulence gene Avr1. Resistance proteins guard the plant against pathogens that contain an appropriate avirulence protein via an indirect interaction with this avirulence protein. That triggers a defense system including the hypersensitive response, which restricts the pathogen growth.</text>
</comment>
<comment type="subcellular location">
    <subcellularLocation>
        <location evidence="1">Cytoplasm</location>
    </subcellularLocation>
    <subcellularLocation>
        <location evidence="1">Membrane</location>
        <topology evidence="1">Peripheral membrane protein</topology>
    </subcellularLocation>
</comment>
<comment type="miscellaneous">
    <text>This protein is encoded by the haplotype A genome of the allohexaploid Solanum demissum.</text>
</comment>
<comment type="similarity">
    <text evidence="4">Belongs to the disease resistance NB-LRR family.</text>
</comment>